<name>EPSO_BACSU</name>
<reference key="1">
    <citation type="journal article" date="1996" name="Microbiology">
        <title>Integrated mapping and sequencing of a 115 kb DNA fragment from Bacillus subtilis: sequence analysis of a 21 kb segment containing the sigL locus.</title>
        <authorList>
            <person name="Fabret C."/>
            <person name="Quentin Y."/>
            <person name="Chapal N."/>
            <person name="Guiseppi A."/>
            <person name="Haiech J."/>
            <person name="Denizot F."/>
        </authorList>
    </citation>
    <scope>NUCLEOTIDE SEQUENCE [GENOMIC DNA]</scope>
    <source>
        <strain>168</strain>
    </source>
</reference>
<reference key="2">
    <citation type="submission" date="1997-04" db="EMBL/GenBank/DDBJ databases">
        <authorList>
            <person name="Denizot F."/>
        </authorList>
    </citation>
    <scope>NUCLEOTIDE SEQUENCE [GENOMIC DNA]</scope>
    <source>
        <strain>168</strain>
    </source>
</reference>
<reference key="3">
    <citation type="journal article" date="1997" name="Nature">
        <title>The complete genome sequence of the Gram-positive bacterium Bacillus subtilis.</title>
        <authorList>
            <person name="Kunst F."/>
            <person name="Ogasawara N."/>
            <person name="Moszer I."/>
            <person name="Albertini A.M."/>
            <person name="Alloni G."/>
            <person name="Azevedo V."/>
            <person name="Bertero M.G."/>
            <person name="Bessieres P."/>
            <person name="Bolotin A."/>
            <person name="Borchert S."/>
            <person name="Borriss R."/>
            <person name="Boursier L."/>
            <person name="Brans A."/>
            <person name="Braun M."/>
            <person name="Brignell S.C."/>
            <person name="Bron S."/>
            <person name="Brouillet S."/>
            <person name="Bruschi C.V."/>
            <person name="Caldwell B."/>
            <person name="Capuano V."/>
            <person name="Carter N.M."/>
            <person name="Choi S.-K."/>
            <person name="Codani J.-J."/>
            <person name="Connerton I.F."/>
            <person name="Cummings N.J."/>
            <person name="Daniel R.A."/>
            <person name="Denizot F."/>
            <person name="Devine K.M."/>
            <person name="Duesterhoeft A."/>
            <person name="Ehrlich S.D."/>
            <person name="Emmerson P.T."/>
            <person name="Entian K.-D."/>
            <person name="Errington J."/>
            <person name="Fabret C."/>
            <person name="Ferrari E."/>
            <person name="Foulger D."/>
            <person name="Fritz C."/>
            <person name="Fujita M."/>
            <person name="Fujita Y."/>
            <person name="Fuma S."/>
            <person name="Galizzi A."/>
            <person name="Galleron N."/>
            <person name="Ghim S.-Y."/>
            <person name="Glaser P."/>
            <person name="Goffeau A."/>
            <person name="Golightly E.J."/>
            <person name="Grandi G."/>
            <person name="Guiseppi G."/>
            <person name="Guy B.J."/>
            <person name="Haga K."/>
            <person name="Haiech J."/>
            <person name="Harwood C.R."/>
            <person name="Henaut A."/>
            <person name="Hilbert H."/>
            <person name="Holsappel S."/>
            <person name="Hosono S."/>
            <person name="Hullo M.-F."/>
            <person name="Itaya M."/>
            <person name="Jones L.-M."/>
            <person name="Joris B."/>
            <person name="Karamata D."/>
            <person name="Kasahara Y."/>
            <person name="Klaerr-Blanchard M."/>
            <person name="Klein C."/>
            <person name="Kobayashi Y."/>
            <person name="Koetter P."/>
            <person name="Koningstein G."/>
            <person name="Krogh S."/>
            <person name="Kumano M."/>
            <person name="Kurita K."/>
            <person name="Lapidus A."/>
            <person name="Lardinois S."/>
            <person name="Lauber J."/>
            <person name="Lazarevic V."/>
            <person name="Lee S.-M."/>
            <person name="Levine A."/>
            <person name="Liu H."/>
            <person name="Masuda S."/>
            <person name="Mauel C."/>
            <person name="Medigue C."/>
            <person name="Medina N."/>
            <person name="Mellado R.P."/>
            <person name="Mizuno M."/>
            <person name="Moestl D."/>
            <person name="Nakai S."/>
            <person name="Noback M."/>
            <person name="Noone D."/>
            <person name="O'Reilly M."/>
            <person name="Ogawa K."/>
            <person name="Ogiwara A."/>
            <person name="Oudega B."/>
            <person name="Park S.-H."/>
            <person name="Parro V."/>
            <person name="Pohl T.M."/>
            <person name="Portetelle D."/>
            <person name="Porwollik S."/>
            <person name="Prescott A.M."/>
            <person name="Presecan E."/>
            <person name="Pujic P."/>
            <person name="Purnelle B."/>
            <person name="Rapoport G."/>
            <person name="Rey M."/>
            <person name="Reynolds S."/>
            <person name="Rieger M."/>
            <person name="Rivolta C."/>
            <person name="Rocha E."/>
            <person name="Roche B."/>
            <person name="Rose M."/>
            <person name="Sadaie Y."/>
            <person name="Sato T."/>
            <person name="Scanlan E."/>
            <person name="Schleich S."/>
            <person name="Schroeter R."/>
            <person name="Scoffone F."/>
            <person name="Sekiguchi J."/>
            <person name="Sekowska A."/>
            <person name="Seror S.J."/>
            <person name="Serror P."/>
            <person name="Shin B.-S."/>
            <person name="Soldo B."/>
            <person name="Sorokin A."/>
            <person name="Tacconi E."/>
            <person name="Takagi T."/>
            <person name="Takahashi H."/>
            <person name="Takemaru K."/>
            <person name="Takeuchi M."/>
            <person name="Tamakoshi A."/>
            <person name="Tanaka T."/>
            <person name="Terpstra P."/>
            <person name="Tognoni A."/>
            <person name="Tosato V."/>
            <person name="Uchiyama S."/>
            <person name="Vandenbol M."/>
            <person name="Vannier F."/>
            <person name="Vassarotti A."/>
            <person name="Viari A."/>
            <person name="Wambutt R."/>
            <person name="Wedler E."/>
            <person name="Wedler H."/>
            <person name="Weitzenegger T."/>
            <person name="Winters P."/>
            <person name="Wipat A."/>
            <person name="Yamamoto H."/>
            <person name="Yamane K."/>
            <person name="Yasumoto K."/>
            <person name="Yata K."/>
            <person name="Yoshida K."/>
            <person name="Yoshikawa H.-F."/>
            <person name="Zumstein E."/>
            <person name="Yoshikawa H."/>
            <person name="Danchin A."/>
        </authorList>
    </citation>
    <scope>NUCLEOTIDE SEQUENCE [LARGE SCALE GENOMIC DNA]</scope>
    <source>
        <strain>168</strain>
    </source>
</reference>
<reference key="4">
    <citation type="journal article" date="2005" name="Mol. Microbiol.">
        <title>A master regulator for biofilm formation by Bacillus subtilis.</title>
        <authorList>
            <person name="Kearns D.B."/>
            <person name="Chu F."/>
            <person name="Branda S.S."/>
            <person name="Kolter R."/>
            <person name="Losick R."/>
        </authorList>
    </citation>
    <scope>PROBABLE FUNCTION</scope>
    <scope>INDUCTION</scope>
</reference>
<accession>P71065</accession>
<accession>O08183</accession>
<accession>Q795J4</accession>
<evidence type="ECO:0000269" key="1">
    <source>
    </source>
</evidence>
<evidence type="ECO:0000305" key="2"/>
<dbReference type="EC" id="2.-.-.-"/>
<dbReference type="EMBL" id="Z71928">
    <property type="protein sequence ID" value="CAA96483.1"/>
    <property type="molecule type" value="Genomic_DNA"/>
</dbReference>
<dbReference type="EMBL" id="Z94043">
    <property type="protein sequence ID" value="CAB07999.1"/>
    <property type="molecule type" value="Genomic_DNA"/>
</dbReference>
<dbReference type="EMBL" id="AL009126">
    <property type="protein sequence ID" value="CAB15427.1"/>
    <property type="molecule type" value="Genomic_DNA"/>
</dbReference>
<dbReference type="PIR" id="G70037">
    <property type="entry name" value="G70037"/>
</dbReference>
<dbReference type="RefSeq" id="NP_391302.1">
    <property type="nucleotide sequence ID" value="NC_000964.3"/>
</dbReference>
<dbReference type="RefSeq" id="WP_003228270.1">
    <property type="nucleotide sequence ID" value="NZ_OZ025638.1"/>
</dbReference>
<dbReference type="SMR" id="P71065"/>
<dbReference type="FunCoup" id="P71065">
    <property type="interactions" value="18"/>
</dbReference>
<dbReference type="STRING" id="224308.BSU34220"/>
<dbReference type="PaxDb" id="224308-BSU34220"/>
<dbReference type="EnsemblBacteria" id="CAB15427">
    <property type="protein sequence ID" value="CAB15427"/>
    <property type="gene ID" value="BSU_34220"/>
</dbReference>
<dbReference type="GeneID" id="936339"/>
<dbReference type="KEGG" id="bsu:BSU34220"/>
<dbReference type="PATRIC" id="fig|224308.179.peg.3709"/>
<dbReference type="eggNOG" id="COG5039">
    <property type="taxonomic scope" value="Bacteria"/>
</dbReference>
<dbReference type="InParanoid" id="P71065"/>
<dbReference type="OrthoDB" id="9807674at2"/>
<dbReference type="PhylomeDB" id="P71065"/>
<dbReference type="BioCyc" id="BSUB:BSU34220-MONOMER"/>
<dbReference type="Proteomes" id="UP000001570">
    <property type="component" value="Chromosome"/>
</dbReference>
<dbReference type="GO" id="GO:0016740">
    <property type="term" value="F:transferase activity"/>
    <property type="evidence" value="ECO:0007669"/>
    <property type="project" value="UniProtKB-KW"/>
</dbReference>
<dbReference type="GO" id="GO:0000271">
    <property type="term" value="P:polysaccharide biosynthetic process"/>
    <property type="evidence" value="ECO:0007669"/>
    <property type="project" value="UniProtKB-KW"/>
</dbReference>
<dbReference type="InterPro" id="IPR007345">
    <property type="entry name" value="Polysacch_pyruvyl_Trfase"/>
</dbReference>
<dbReference type="Pfam" id="PF04230">
    <property type="entry name" value="PS_pyruv_trans"/>
    <property type="match status" value="1"/>
</dbReference>
<gene>
    <name type="primary">epsO</name>
    <name type="synonym">yvfF</name>
    <name type="ordered locus">BSU34220</name>
</gene>
<feature type="chain" id="PRO_0000360688" description="Putative pyruvyl transferase EpsO">
    <location>
        <begin position="1"/>
        <end position="322"/>
    </location>
</feature>
<sequence length="322" mass="37275">MDSKHSMISLKQKLSGLLDVIPKQSEIIYADYPLYGNVGDLFIMKGTEAFFKEHGIRVRKRWNPDNFPIGRKLDPNLIIVCQGGGNFGDLYPYYQGFREKIVQTYPNHKIVILPQSIYFQNKDNLKRTAEIFSKHANLHIMTREKASYATAQAYFTTNHIQLLPDMAHQLFPVIPTQQPSNQKLRFIRTDHEANQALQEHAEAESYDWRTVLSASDRRTIAFLQTLNVLNKKAGNPLPIAYIWEKYSDYIVQKAIRFFSRYESVETSRLHGHILSSLLQKENTVIDNSYGKNANYFHTWMEGVPSTRLIQHASKKENLPAHM</sequence>
<proteinExistence type="evidence at transcript level"/>
<organism>
    <name type="scientific">Bacillus subtilis (strain 168)</name>
    <dbReference type="NCBI Taxonomy" id="224308"/>
    <lineage>
        <taxon>Bacteria</taxon>
        <taxon>Bacillati</taxon>
        <taxon>Bacillota</taxon>
        <taxon>Bacilli</taxon>
        <taxon>Bacillales</taxon>
        <taxon>Bacillaceae</taxon>
        <taxon>Bacillus</taxon>
    </lineage>
</organism>
<keyword id="KW-0270">Exopolysaccharide synthesis</keyword>
<keyword id="KW-1185">Reference proteome</keyword>
<keyword id="KW-0808">Transferase</keyword>
<protein>
    <recommendedName>
        <fullName>Putative pyruvyl transferase EpsO</fullName>
        <ecNumber>2.-.-.-</ecNumber>
    </recommendedName>
</protein>
<comment type="function">
    <text>May be involved in the production of the exopolysaccharide (EPS) component of the extracellular matrix during biofilm formation. EPS is responsible for the adhesion of chains of cells into bundles.</text>
</comment>
<comment type="induction">
    <text evidence="1">Repressed by SinR.</text>
</comment>
<comment type="similarity">
    <text evidence="2">Belongs to the polysaccharide pyruvyl transferase family.</text>
</comment>